<comment type="function">
    <text evidence="1">Catalyzes the acyloin condensation reaction between C atoms 2 and 3 of pyruvate and glyceraldehyde 3-phosphate to yield 1-deoxy-D-xylulose-5-phosphate (DXP).</text>
</comment>
<comment type="catalytic activity">
    <reaction evidence="1">
        <text>D-glyceraldehyde 3-phosphate + pyruvate + H(+) = 1-deoxy-D-xylulose 5-phosphate + CO2</text>
        <dbReference type="Rhea" id="RHEA:12605"/>
        <dbReference type="ChEBI" id="CHEBI:15361"/>
        <dbReference type="ChEBI" id="CHEBI:15378"/>
        <dbReference type="ChEBI" id="CHEBI:16526"/>
        <dbReference type="ChEBI" id="CHEBI:57792"/>
        <dbReference type="ChEBI" id="CHEBI:59776"/>
        <dbReference type="EC" id="2.2.1.7"/>
    </reaction>
</comment>
<comment type="cofactor">
    <cofactor evidence="1">
        <name>Mg(2+)</name>
        <dbReference type="ChEBI" id="CHEBI:18420"/>
    </cofactor>
    <text evidence="1">Binds 1 Mg(2+) ion per subunit.</text>
</comment>
<comment type="cofactor">
    <cofactor evidence="1">
        <name>thiamine diphosphate</name>
        <dbReference type="ChEBI" id="CHEBI:58937"/>
    </cofactor>
    <text evidence="1">Binds 1 thiamine pyrophosphate per subunit.</text>
</comment>
<comment type="pathway">
    <text evidence="1">Metabolic intermediate biosynthesis; 1-deoxy-D-xylulose 5-phosphate biosynthesis; 1-deoxy-D-xylulose 5-phosphate from D-glyceraldehyde 3-phosphate and pyruvate: step 1/1.</text>
</comment>
<comment type="subunit">
    <text evidence="1">Homodimer.</text>
</comment>
<comment type="similarity">
    <text evidence="1">Belongs to the transketolase family. DXPS subfamily.</text>
</comment>
<proteinExistence type="inferred from homology"/>
<organism>
    <name type="scientific">Escherichia coli (strain 55989 / EAEC)</name>
    <dbReference type="NCBI Taxonomy" id="585055"/>
    <lineage>
        <taxon>Bacteria</taxon>
        <taxon>Pseudomonadati</taxon>
        <taxon>Pseudomonadota</taxon>
        <taxon>Gammaproteobacteria</taxon>
        <taxon>Enterobacterales</taxon>
        <taxon>Enterobacteriaceae</taxon>
        <taxon>Escherichia</taxon>
    </lineage>
</organism>
<reference key="1">
    <citation type="journal article" date="2009" name="PLoS Genet.">
        <title>Organised genome dynamics in the Escherichia coli species results in highly diverse adaptive paths.</title>
        <authorList>
            <person name="Touchon M."/>
            <person name="Hoede C."/>
            <person name="Tenaillon O."/>
            <person name="Barbe V."/>
            <person name="Baeriswyl S."/>
            <person name="Bidet P."/>
            <person name="Bingen E."/>
            <person name="Bonacorsi S."/>
            <person name="Bouchier C."/>
            <person name="Bouvet O."/>
            <person name="Calteau A."/>
            <person name="Chiapello H."/>
            <person name="Clermont O."/>
            <person name="Cruveiller S."/>
            <person name="Danchin A."/>
            <person name="Diard M."/>
            <person name="Dossat C."/>
            <person name="Karoui M.E."/>
            <person name="Frapy E."/>
            <person name="Garry L."/>
            <person name="Ghigo J.M."/>
            <person name="Gilles A.M."/>
            <person name="Johnson J."/>
            <person name="Le Bouguenec C."/>
            <person name="Lescat M."/>
            <person name="Mangenot S."/>
            <person name="Martinez-Jehanne V."/>
            <person name="Matic I."/>
            <person name="Nassif X."/>
            <person name="Oztas S."/>
            <person name="Petit M.A."/>
            <person name="Pichon C."/>
            <person name="Rouy Z."/>
            <person name="Ruf C.S."/>
            <person name="Schneider D."/>
            <person name="Tourret J."/>
            <person name="Vacherie B."/>
            <person name="Vallenet D."/>
            <person name="Medigue C."/>
            <person name="Rocha E.P.C."/>
            <person name="Denamur E."/>
        </authorList>
    </citation>
    <scope>NUCLEOTIDE SEQUENCE [LARGE SCALE GENOMIC DNA]</scope>
    <source>
        <strain>55989 / EAEC</strain>
    </source>
</reference>
<evidence type="ECO:0000255" key="1">
    <source>
        <dbReference type="HAMAP-Rule" id="MF_00315"/>
    </source>
</evidence>
<accession>B7L654</accession>
<dbReference type="EC" id="2.2.1.7" evidence="1"/>
<dbReference type="EMBL" id="CU928145">
    <property type="protein sequence ID" value="CAU96304.1"/>
    <property type="molecule type" value="Genomic_DNA"/>
</dbReference>
<dbReference type="RefSeq" id="WP_000006808.1">
    <property type="nucleotide sequence ID" value="NC_011748.1"/>
</dbReference>
<dbReference type="SMR" id="B7L654"/>
<dbReference type="KEGG" id="eck:EC55989_0430"/>
<dbReference type="HOGENOM" id="CLU_009227_1_4_6"/>
<dbReference type="UniPathway" id="UPA00064">
    <property type="reaction ID" value="UER00091"/>
</dbReference>
<dbReference type="Proteomes" id="UP000000746">
    <property type="component" value="Chromosome"/>
</dbReference>
<dbReference type="GO" id="GO:0005829">
    <property type="term" value="C:cytosol"/>
    <property type="evidence" value="ECO:0007669"/>
    <property type="project" value="TreeGrafter"/>
</dbReference>
<dbReference type="GO" id="GO:0008661">
    <property type="term" value="F:1-deoxy-D-xylulose-5-phosphate synthase activity"/>
    <property type="evidence" value="ECO:0007669"/>
    <property type="project" value="UniProtKB-UniRule"/>
</dbReference>
<dbReference type="GO" id="GO:0000287">
    <property type="term" value="F:magnesium ion binding"/>
    <property type="evidence" value="ECO:0007669"/>
    <property type="project" value="UniProtKB-UniRule"/>
</dbReference>
<dbReference type="GO" id="GO:0030976">
    <property type="term" value="F:thiamine pyrophosphate binding"/>
    <property type="evidence" value="ECO:0007669"/>
    <property type="project" value="UniProtKB-UniRule"/>
</dbReference>
<dbReference type="GO" id="GO:0052865">
    <property type="term" value="P:1-deoxy-D-xylulose 5-phosphate biosynthetic process"/>
    <property type="evidence" value="ECO:0007669"/>
    <property type="project" value="UniProtKB-UniPathway"/>
</dbReference>
<dbReference type="GO" id="GO:0019288">
    <property type="term" value="P:isopentenyl diphosphate biosynthetic process, methylerythritol 4-phosphate pathway"/>
    <property type="evidence" value="ECO:0007669"/>
    <property type="project" value="TreeGrafter"/>
</dbReference>
<dbReference type="GO" id="GO:0016114">
    <property type="term" value="P:terpenoid biosynthetic process"/>
    <property type="evidence" value="ECO:0007669"/>
    <property type="project" value="UniProtKB-UniRule"/>
</dbReference>
<dbReference type="GO" id="GO:0009228">
    <property type="term" value="P:thiamine biosynthetic process"/>
    <property type="evidence" value="ECO:0007669"/>
    <property type="project" value="UniProtKB-UniRule"/>
</dbReference>
<dbReference type="CDD" id="cd02007">
    <property type="entry name" value="TPP_DXS"/>
    <property type="match status" value="1"/>
</dbReference>
<dbReference type="CDD" id="cd07033">
    <property type="entry name" value="TPP_PYR_DXS_TK_like"/>
    <property type="match status" value="1"/>
</dbReference>
<dbReference type="FunFam" id="3.40.50.920:FF:000002">
    <property type="entry name" value="1-deoxy-D-xylulose-5-phosphate synthase"/>
    <property type="match status" value="1"/>
</dbReference>
<dbReference type="FunFam" id="3.40.50.970:FF:000005">
    <property type="entry name" value="1-deoxy-D-xylulose-5-phosphate synthase"/>
    <property type="match status" value="1"/>
</dbReference>
<dbReference type="Gene3D" id="3.40.50.920">
    <property type="match status" value="1"/>
</dbReference>
<dbReference type="Gene3D" id="3.40.50.970">
    <property type="match status" value="2"/>
</dbReference>
<dbReference type="HAMAP" id="MF_00315">
    <property type="entry name" value="DXP_synth"/>
    <property type="match status" value="1"/>
</dbReference>
<dbReference type="InterPro" id="IPR005477">
    <property type="entry name" value="Dxylulose-5-P_synthase"/>
</dbReference>
<dbReference type="InterPro" id="IPR029061">
    <property type="entry name" value="THDP-binding"/>
</dbReference>
<dbReference type="InterPro" id="IPR009014">
    <property type="entry name" value="Transketo_C/PFOR_II"/>
</dbReference>
<dbReference type="InterPro" id="IPR005475">
    <property type="entry name" value="Transketolase-like_Pyr-bd"/>
</dbReference>
<dbReference type="InterPro" id="IPR020826">
    <property type="entry name" value="Transketolase_BS"/>
</dbReference>
<dbReference type="InterPro" id="IPR033248">
    <property type="entry name" value="Transketolase_C"/>
</dbReference>
<dbReference type="InterPro" id="IPR049557">
    <property type="entry name" value="Transketolase_CS"/>
</dbReference>
<dbReference type="NCBIfam" id="TIGR00204">
    <property type="entry name" value="dxs"/>
    <property type="match status" value="1"/>
</dbReference>
<dbReference type="NCBIfam" id="NF003933">
    <property type="entry name" value="PRK05444.2-2"/>
    <property type="match status" value="1"/>
</dbReference>
<dbReference type="PANTHER" id="PTHR43322">
    <property type="entry name" value="1-D-DEOXYXYLULOSE 5-PHOSPHATE SYNTHASE-RELATED"/>
    <property type="match status" value="1"/>
</dbReference>
<dbReference type="PANTHER" id="PTHR43322:SF5">
    <property type="entry name" value="1-DEOXY-D-XYLULOSE-5-PHOSPHATE SYNTHASE, CHLOROPLASTIC"/>
    <property type="match status" value="1"/>
</dbReference>
<dbReference type="Pfam" id="PF13292">
    <property type="entry name" value="DXP_synthase_N"/>
    <property type="match status" value="1"/>
</dbReference>
<dbReference type="Pfam" id="PF02779">
    <property type="entry name" value="Transket_pyr"/>
    <property type="match status" value="1"/>
</dbReference>
<dbReference type="Pfam" id="PF02780">
    <property type="entry name" value="Transketolase_C"/>
    <property type="match status" value="1"/>
</dbReference>
<dbReference type="SMART" id="SM00861">
    <property type="entry name" value="Transket_pyr"/>
    <property type="match status" value="1"/>
</dbReference>
<dbReference type="SUPFAM" id="SSF52518">
    <property type="entry name" value="Thiamin diphosphate-binding fold (THDP-binding)"/>
    <property type="match status" value="2"/>
</dbReference>
<dbReference type="SUPFAM" id="SSF52922">
    <property type="entry name" value="TK C-terminal domain-like"/>
    <property type="match status" value="1"/>
</dbReference>
<dbReference type="PROSITE" id="PS00801">
    <property type="entry name" value="TRANSKETOLASE_1"/>
    <property type="match status" value="1"/>
</dbReference>
<dbReference type="PROSITE" id="PS00802">
    <property type="entry name" value="TRANSKETOLASE_2"/>
    <property type="match status" value="1"/>
</dbReference>
<protein>
    <recommendedName>
        <fullName evidence="1">1-deoxy-D-xylulose-5-phosphate synthase</fullName>
        <ecNumber evidence="1">2.2.1.7</ecNumber>
    </recommendedName>
    <alternativeName>
        <fullName evidence="1">1-deoxyxylulose-5-phosphate synthase</fullName>
        <shortName evidence="1">DXP synthase</shortName>
        <shortName evidence="1">DXPS</shortName>
    </alternativeName>
</protein>
<feature type="chain" id="PRO_1000132933" description="1-deoxy-D-xylulose-5-phosphate synthase">
    <location>
        <begin position="1"/>
        <end position="620"/>
    </location>
</feature>
<feature type="binding site" evidence="1">
    <location>
        <position position="80"/>
    </location>
    <ligand>
        <name>thiamine diphosphate</name>
        <dbReference type="ChEBI" id="CHEBI:58937"/>
    </ligand>
</feature>
<feature type="binding site" evidence="1">
    <location>
        <begin position="121"/>
        <end position="123"/>
    </location>
    <ligand>
        <name>thiamine diphosphate</name>
        <dbReference type="ChEBI" id="CHEBI:58937"/>
    </ligand>
</feature>
<feature type="binding site" evidence="1">
    <location>
        <position position="152"/>
    </location>
    <ligand>
        <name>Mg(2+)</name>
        <dbReference type="ChEBI" id="CHEBI:18420"/>
    </ligand>
</feature>
<feature type="binding site" evidence="1">
    <location>
        <begin position="153"/>
        <end position="154"/>
    </location>
    <ligand>
        <name>thiamine diphosphate</name>
        <dbReference type="ChEBI" id="CHEBI:58937"/>
    </ligand>
</feature>
<feature type="binding site" evidence="1">
    <location>
        <position position="181"/>
    </location>
    <ligand>
        <name>Mg(2+)</name>
        <dbReference type="ChEBI" id="CHEBI:18420"/>
    </ligand>
</feature>
<feature type="binding site" evidence="1">
    <location>
        <position position="181"/>
    </location>
    <ligand>
        <name>thiamine diphosphate</name>
        <dbReference type="ChEBI" id="CHEBI:58937"/>
    </ligand>
</feature>
<feature type="binding site" evidence="1">
    <location>
        <position position="288"/>
    </location>
    <ligand>
        <name>thiamine diphosphate</name>
        <dbReference type="ChEBI" id="CHEBI:58937"/>
    </ligand>
</feature>
<feature type="binding site" evidence="1">
    <location>
        <position position="370"/>
    </location>
    <ligand>
        <name>thiamine diphosphate</name>
        <dbReference type="ChEBI" id="CHEBI:58937"/>
    </ligand>
</feature>
<keyword id="KW-0414">Isoprene biosynthesis</keyword>
<keyword id="KW-0460">Magnesium</keyword>
<keyword id="KW-0479">Metal-binding</keyword>
<keyword id="KW-1185">Reference proteome</keyword>
<keyword id="KW-0784">Thiamine biosynthesis</keyword>
<keyword id="KW-0786">Thiamine pyrophosphate</keyword>
<keyword id="KW-0808">Transferase</keyword>
<gene>
    <name evidence="1" type="primary">dxs</name>
    <name type="ordered locus">EC55989_0430</name>
</gene>
<sequence>MSFDIAKYPTLALVDSTQELRLLPKESLPKLCDELRRYLLDSVSRSSGHFASGLGTVELTVALHYVYNTPFDQLIWDVGHQAYPHKILTGRRDKIGTIRQKGGLHPFPWRGESEYDVLSVGHSSTSISAGIGIAVAAEKEGKNRRTVCVIGDGAITAGMAFEAMNHAGDIRPDMLVVLNDNEMSISENVGALNNHLAQLLSGKLYSSLREGGKKVFSGVPPIKELLKRTEEHIKGMVVPGTLFEELGFNYIGPVDGHDVLGLITTLKNMRDLKGPQFLHIMTKKGRGYEPAEKDPITFHAVPKFDPSSGCLPKSSGGLPSYSKIFGDWLCETAAKDNKLMAITPAMREGSGMVEFSRKFPDRYFDVAIAEQHAVTFAAGLAIGGYKPIVAIYSTFLQRAYDQVLHDVAIQKLPVLFAIDRAGIVGADGQTHQGAFDLSYLRCIPEMVIMTPSDENECRQMLYTGYHYNDGPSAVRYPRGNAVGVELTPLEKLPIGKGIVKRRGEKLAILNFGTLMPDAAKVAESLNATLVDMRFVKPLDEALILEMAASHEALVTVEENAIMGGAGSGVNEVLMAHRKPVPVLNIGLPDFFIPQGTQEEMRAELGLGAAGMEAKIKAWLA</sequence>
<name>DXS_ECO55</name>